<dbReference type="EMBL" id="CP000820">
    <property type="protein sequence ID" value="ABW15411.1"/>
    <property type="molecule type" value="Genomic_DNA"/>
</dbReference>
<dbReference type="SMR" id="A8LC74"/>
<dbReference type="STRING" id="298653.Franean1_6067"/>
<dbReference type="KEGG" id="fre:Franean1_6067"/>
<dbReference type="eggNOG" id="COG0267">
    <property type="taxonomic scope" value="Bacteria"/>
</dbReference>
<dbReference type="HOGENOM" id="CLU_190949_0_2_11"/>
<dbReference type="GO" id="GO:0005737">
    <property type="term" value="C:cytoplasm"/>
    <property type="evidence" value="ECO:0007669"/>
    <property type="project" value="UniProtKB-ARBA"/>
</dbReference>
<dbReference type="GO" id="GO:1990904">
    <property type="term" value="C:ribonucleoprotein complex"/>
    <property type="evidence" value="ECO:0007669"/>
    <property type="project" value="UniProtKB-KW"/>
</dbReference>
<dbReference type="GO" id="GO:0005840">
    <property type="term" value="C:ribosome"/>
    <property type="evidence" value="ECO:0007669"/>
    <property type="project" value="UniProtKB-KW"/>
</dbReference>
<dbReference type="GO" id="GO:0003735">
    <property type="term" value="F:structural constituent of ribosome"/>
    <property type="evidence" value="ECO:0007669"/>
    <property type="project" value="InterPro"/>
</dbReference>
<dbReference type="GO" id="GO:0006412">
    <property type="term" value="P:translation"/>
    <property type="evidence" value="ECO:0007669"/>
    <property type="project" value="UniProtKB-UniRule"/>
</dbReference>
<dbReference type="Gene3D" id="2.20.28.120">
    <property type="entry name" value="Ribosomal protein L33"/>
    <property type="match status" value="1"/>
</dbReference>
<dbReference type="HAMAP" id="MF_00294">
    <property type="entry name" value="Ribosomal_bL33"/>
    <property type="match status" value="1"/>
</dbReference>
<dbReference type="InterPro" id="IPR001705">
    <property type="entry name" value="Ribosomal_bL33"/>
</dbReference>
<dbReference type="InterPro" id="IPR018264">
    <property type="entry name" value="Ribosomal_bL33_CS"/>
</dbReference>
<dbReference type="InterPro" id="IPR038584">
    <property type="entry name" value="Ribosomal_bL33_sf"/>
</dbReference>
<dbReference type="InterPro" id="IPR011332">
    <property type="entry name" value="Ribosomal_zn-bd"/>
</dbReference>
<dbReference type="NCBIfam" id="NF001764">
    <property type="entry name" value="PRK00504.1"/>
    <property type="match status" value="1"/>
</dbReference>
<dbReference type="NCBIfam" id="NF001860">
    <property type="entry name" value="PRK00595.1"/>
    <property type="match status" value="1"/>
</dbReference>
<dbReference type="NCBIfam" id="TIGR01023">
    <property type="entry name" value="rpmG_bact"/>
    <property type="match status" value="1"/>
</dbReference>
<dbReference type="PANTHER" id="PTHR43168">
    <property type="entry name" value="50S RIBOSOMAL PROTEIN L33, CHLOROPLASTIC"/>
    <property type="match status" value="1"/>
</dbReference>
<dbReference type="PANTHER" id="PTHR43168:SF2">
    <property type="entry name" value="LARGE RIBOSOMAL SUBUNIT PROTEIN BL33C"/>
    <property type="match status" value="1"/>
</dbReference>
<dbReference type="Pfam" id="PF00471">
    <property type="entry name" value="Ribosomal_L33"/>
    <property type="match status" value="1"/>
</dbReference>
<dbReference type="SUPFAM" id="SSF57829">
    <property type="entry name" value="Zn-binding ribosomal proteins"/>
    <property type="match status" value="1"/>
</dbReference>
<dbReference type="PROSITE" id="PS00582">
    <property type="entry name" value="RIBOSOMAL_L33"/>
    <property type="match status" value="1"/>
</dbReference>
<keyword id="KW-0687">Ribonucleoprotein</keyword>
<keyword id="KW-0689">Ribosomal protein</keyword>
<sequence length="54" mass="6569">MAATDVRPKITMACQVCKHRNYITRKNRRNDPDRLELRKFCPNCRTHTEHRETR</sequence>
<feature type="chain" id="PRO_1000115133" description="Large ribosomal subunit protein bL33">
    <location>
        <begin position="1"/>
        <end position="54"/>
    </location>
</feature>
<evidence type="ECO:0000255" key="1">
    <source>
        <dbReference type="HAMAP-Rule" id="MF_00294"/>
    </source>
</evidence>
<evidence type="ECO:0000305" key="2"/>
<comment type="similarity">
    <text evidence="1">Belongs to the bacterial ribosomal protein bL33 family.</text>
</comment>
<protein>
    <recommendedName>
        <fullName evidence="1">Large ribosomal subunit protein bL33</fullName>
    </recommendedName>
    <alternativeName>
        <fullName evidence="2">50S ribosomal protein L33</fullName>
    </alternativeName>
</protein>
<name>RL33_PARS2</name>
<organism>
    <name type="scientific">Parafrankia sp. (strain EAN1pec)</name>
    <dbReference type="NCBI Taxonomy" id="298653"/>
    <lineage>
        <taxon>Bacteria</taxon>
        <taxon>Bacillati</taxon>
        <taxon>Actinomycetota</taxon>
        <taxon>Actinomycetes</taxon>
        <taxon>Frankiales</taxon>
        <taxon>Frankiaceae</taxon>
        <taxon>Parafrankia</taxon>
    </lineage>
</organism>
<reference key="1">
    <citation type="journal article" date="2007" name="Genome Res.">
        <title>Genome characteristics of facultatively symbiotic Frankia sp. strains reflect host range and host plant biogeography.</title>
        <authorList>
            <person name="Normand P."/>
            <person name="Lapierre P."/>
            <person name="Tisa L.S."/>
            <person name="Gogarten J.P."/>
            <person name="Alloisio N."/>
            <person name="Bagnarol E."/>
            <person name="Bassi C.A."/>
            <person name="Berry A.M."/>
            <person name="Bickhart D.M."/>
            <person name="Choisne N."/>
            <person name="Couloux A."/>
            <person name="Cournoyer B."/>
            <person name="Cruveiller S."/>
            <person name="Daubin V."/>
            <person name="Demange N."/>
            <person name="Francino M.P."/>
            <person name="Goltsman E."/>
            <person name="Huang Y."/>
            <person name="Kopp O.R."/>
            <person name="Labarre L."/>
            <person name="Lapidus A."/>
            <person name="Lavire C."/>
            <person name="Marechal J."/>
            <person name="Martinez M."/>
            <person name="Mastronunzio J.E."/>
            <person name="Mullin B.C."/>
            <person name="Niemann J."/>
            <person name="Pujic P."/>
            <person name="Rawnsley T."/>
            <person name="Rouy Z."/>
            <person name="Schenowitz C."/>
            <person name="Sellstedt A."/>
            <person name="Tavares F."/>
            <person name="Tomkins J.P."/>
            <person name="Vallenet D."/>
            <person name="Valverde C."/>
            <person name="Wall L.G."/>
            <person name="Wang Y."/>
            <person name="Medigue C."/>
            <person name="Benson D.R."/>
        </authorList>
    </citation>
    <scope>NUCLEOTIDE SEQUENCE [LARGE SCALE GENOMIC DNA]</scope>
    <source>
        <strain>EAN1pec</strain>
    </source>
</reference>
<proteinExistence type="inferred from homology"/>
<accession>A8LC74</accession>
<gene>
    <name evidence="1" type="primary">rpmG</name>
    <name type="ordered locus">Franean1_6067</name>
</gene>